<accession>Q9K9S8</accession>
<reference key="1">
    <citation type="journal article" date="2000" name="Nucleic Acids Res.">
        <title>Complete genome sequence of the alkaliphilic bacterium Bacillus halodurans and genomic sequence comparison with Bacillus subtilis.</title>
        <authorList>
            <person name="Takami H."/>
            <person name="Nakasone K."/>
            <person name="Takaki Y."/>
            <person name="Maeno G."/>
            <person name="Sasaki R."/>
            <person name="Masui N."/>
            <person name="Fuji F."/>
            <person name="Hirama C."/>
            <person name="Nakamura Y."/>
            <person name="Ogasawara N."/>
            <person name="Kuhara S."/>
            <person name="Horikoshi K."/>
        </authorList>
    </citation>
    <scope>NUCLEOTIDE SEQUENCE [LARGE SCALE GENOMIC DNA]</scope>
    <source>
        <strain>ATCC BAA-125 / DSM 18197 / FERM 7344 / JCM 9153 / C-125</strain>
    </source>
</reference>
<comment type="function">
    <text evidence="1">Cell wall formation. Catalyzes the addition of glutamate to the nucleotide precursor UDP-N-acetylmuramoyl-L-alanine (UMA).</text>
</comment>
<comment type="catalytic activity">
    <reaction evidence="1">
        <text>UDP-N-acetyl-alpha-D-muramoyl-L-alanine + D-glutamate + ATP = UDP-N-acetyl-alpha-D-muramoyl-L-alanyl-D-glutamate + ADP + phosphate + H(+)</text>
        <dbReference type="Rhea" id="RHEA:16429"/>
        <dbReference type="ChEBI" id="CHEBI:15378"/>
        <dbReference type="ChEBI" id="CHEBI:29986"/>
        <dbReference type="ChEBI" id="CHEBI:30616"/>
        <dbReference type="ChEBI" id="CHEBI:43474"/>
        <dbReference type="ChEBI" id="CHEBI:83898"/>
        <dbReference type="ChEBI" id="CHEBI:83900"/>
        <dbReference type="ChEBI" id="CHEBI:456216"/>
        <dbReference type="EC" id="6.3.2.9"/>
    </reaction>
</comment>
<comment type="pathway">
    <text evidence="1">Cell wall biogenesis; peptidoglycan biosynthesis.</text>
</comment>
<comment type="subcellular location">
    <subcellularLocation>
        <location evidence="1">Cytoplasm</location>
    </subcellularLocation>
</comment>
<comment type="similarity">
    <text evidence="1">Belongs to the MurCDEF family.</text>
</comment>
<proteinExistence type="inferred from homology"/>
<name>MURD_HALH5</name>
<gene>
    <name evidence="1" type="primary">murD</name>
    <name type="ordered locus">BH2567</name>
</gene>
<protein>
    <recommendedName>
        <fullName evidence="1">UDP-N-acetylmuramoylalanine--D-glutamate ligase</fullName>
        <ecNumber evidence="1">6.3.2.9</ecNumber>
    </recommendedName>
    <alternativeName>
        <fullName evidence="1">D-glutamic acid-adding enzyme</fullName>
    </alternativeName>
    <alternativeName>
        <fullName evidence="1">UDP-N-acetylmuramoyl-L-alanyl-D-glutamate synthetase</fullName>
    </alternativeName>
</protein>
<sequence length="450" mass="48757">MKHTEQFHQKHILVLGLAKSGEAAARLLHDLGAIVTVNDQKPLADNPQAQKLQKEGIHVVCGEHPISLLDGKELVVKNPGIRYDNPIVEEAIKRGISVVTEVELASKVSEAEIVAITGSNGKTTTTSLVVEMLKGSAREPKVAGNIGVVASDVAREATADDVIVMEVSSFQLMGTSHFRPKVAILLNIFDAHLDYHGSKENYVAAKKKIVENMKEEDYFVYNADDPLVSKVAAETKATPIPFSRSTVVKSGAYVDGETYMFRGEKIVEKGDVVLPGDHNVDNVLAAMSAALLMGATKEQIHHVLSTFSGVEHRLQFVGTAFERKWYNDSKATNILSTTAAIQSFTDPIVLLAGGLDRGNSFDDLIPALQKVKAVVLFGETKHKLAQAAMEAGVETIVEAERVEDAVRKALDVSANGDVILLSPACASWDQYRTFEERGEAFVTSIEGLQE</sequence>
<feature type="chain" id="PRO_0000108964" description="UDP-N-acetylmuramoylalanine--D-glutamate ligase">
    <location>
        <begin position="1"/>
        <end position="450"/>
    </location>
</feature>
<feature type="binding site" evidence="1">
    <location>
        <begin position="118"/>
        <end position="124"/>
    </location>
    <ligand>
        <name>ATP</name>
        <dbReference type="ChEBI" id="CHEBI:30616"/>
    </ligand>
</feature>
<organism>
    <name type="scientific">Halalkalibacterium halodurans (strain ATCC BAA-125 / DSM 18197 / FERM 7344 / JCM 9153 / C-125)</name>
    <name type="common">Bacillus halodurans</name>
    <dbReference type="NCBI Taxonomy" id="272558"/>
    <lineage>
        <taxon>Bacteria</taxon>
        <taxon>Bacillati</taxon>
        <taxon>Bacillota</taxon>
        <taxon>Bacilli</taxon>
        <taxon>Bacillales</taxon>
        <taxon>Bacillaceae</taxon>
        <taxon>Halalkalibacterium (ex Joshi et al. 2022)</taxon>
    </lineage>
</organism>
<keyword id="KW-0067">ATP-binding</keyword>
<keyword id="KW-0131">Cell cycle</keyword>
<keyword id="KW-0132">Cell division</keyword>
<keyword id="KW-0133">Cell shape</keyword>
<keyword id="KW-0961">Cell wall biogenesis/degradation</keyword>
<keyword id="KW-0963">Cytoplasm</keyword>
<keyword id="KW-0436">Ligase</keyword>
<keyword id="KW-0547">Nucleotide-binding</keyword>
<keyword id="KW-0573">Peptidoglycan synthesis</keyword>
<keyword id="KW-1185">Reference proteome</keyword>
<evidence type="ECO:0000255" key="1">
    <source>
        <dbReference type="HAMAP-Rule" id="MF_00639"/>
    </source>
</evidence>
<dbReference type="EC" id="6.3.2.9" evidence="1"/>
<dbReference type="EMBL" id="BA000004">
    <property type="protein sequence ID" value="BAB06286.1"/>
    <property type="molecule type" value="Genomic_DNA"/>
</dbReference>
<dbReference type="PIR" id="G83970">
    <property type="entry name" value="G83970"/>
</dbReference>
<dbReference type="RefSeq" id="WP_010898718.1">
    <property type="nucleotide sequence ID" value="NC_002570.2"/>
</dbReference>
<dbReference type="SMR" id="Q9K9S8"/>
<dbReference type="STRING" id="272558.gene:10728465"/>
<dbReference type="KEGG" id="bha:BH2567"/>
<dbReference type="eggNOG" id="COG0771">
    <property type="taxonomic scope" value="Bacteria"/>
</dbReference>
<dbReference type="HOGENOM" id="CLU_032540_0_1_9"/>
<dbReference type="OrthoDB" id="9809796at2"/>
<dbReference type="UniPathway" id="UPA00219"/>
<dbReference type="Proteomes" id="UP000001258">
    <property type="component" value="Chromosome"/>
</dbReference>
<dbReference type="GO" id="GO:0005737">
    <property type="term" value="C:cytoplasm"/>
    <property type="evidence" value="ECO:0007669"/>
    <property type="project" value="UniProtKB-SubCell"/>
</dbReference>
<dbReference type="GO" id="GO:0005524">
    <property type="term" value="F:ATP binding"/>
    <property type="evidence" value="ECO:0007669"/>
    <property type="project" value="UniProtKB-UniRule"/>
</dbReference>
<dbReference type="GO" id="GO:0008764">
    <property type="term" value="F:UDP-N-acetylmuramoylalanine-D-glutamate ligase activity"/>
    <property type="evidence" value="ECO:0007669"/>
    <property type="project" value="UniProtKB-UniRule"/>
</dbReference>
<dbReference type="GO" id="GO:0051301">
    <property type="term" value="P:cell division"/>
    <property type="evidence" value="ECO:0007669"/>
    <property type="project" value="UniProtKB-KW"/>
</dbReference>
<dbReference type="GO" id="GO:0071555">
    <property type="term" value="P:cell wall organization"/>
    <property type="evidence" value="ECO:0007669"/>
    <property type="project" value="UniProtKB-KW"/>
</dbReference>
<dbReference type="GO" id="GO:0009252">
    <property type="term" value="P:peptidoglycan biosynthetic process"/>
    <property type="evidence" value="ECO:0007669"/>
    <property type="project" value="UniProtKB-UniRule"/>
</dbReference>
<dbReference type="GO" id="GO:0008360">
    <property type="term" value="P:regulation of cell shape"/>
    <property type="evidence" value="ECO:0007669"/>
    <property type="project" value="UniProtKB-KW"/>
</dbReference>
<dbReference type="Gene3D" id="3.90.190.20">
    <property type="entry name" value="Mur ligase, C-terminal domain"/>
    <property type="match status" value="1"/>
</dbReference>
<dbReference type="Gene3D" id="3.40.1190.10">
    <property type="entry name" value="Mur-like, catalytic domain"/>
    <property type="match status" value="1"/>
</dbReference>
<dbReference type="Gene3D" id="3.40.50.720">
    <property type="entry name" value="NAD(P)-binding Rossmann-like Domain"/>
    <property type="match status" value="1"/>
</dbReference>
<dbReference type="HAMAP" id="MF_00639">
    <property type="entry name" value="MurD"/>
    <property type="match status" value="1"/>
</dbReference>
<dbReference type="InterPro" id="IPR036565">
    <property type="entry name" value="Mur-like_cat_sf"/>
</dbReference>
<dbReference type="InterPro" id="IPR004101">
    <property type="entry name" value="Mur_ligase_C"/>
</dbReference>
<dbReference type="InterPro" id="IPR036615">
    <property type="entry name" value="Mur_ligase_C_dom_sf"/>
</dbReference>
<dbReference type="InterPro" id="IPR013221">
    <property type="entry name" value="Mur_ligase_cen"/>
</dbReference>
<dbReference type="InterPro" id="IPR005762">
    <property type="entry name" value="MurD"/>
</dbReference>
<dbReference type="NCBIfam" id="TIGR01087">
    <property type="entry name" value="murD"/>
    <property type="match status" value="1"/>
</dbReference>
<dbReference type="PANTHER" id="PTHR43692">
    <property type="entry name" value="UDP-N-ACETYLMURAMOYLALANINE--D-GLUTAMATE LIGASE"/>
    <property type="match status" value="1"/>
</dbReference>
<dbReference type="PANTHER" id="PTHR43692:SF1">
    <property type="entry name" value="UDP-N-ACETYLMURAMOYLALANINE--D-GLUTAMATE LIGASE"/>
    <property type="match status" value="1"/>
</dbReference>
<dbReference type="Pfam" id="PF02875">
    <property type="entry name" value="Mur_ligase_C"/>
    <property type="match status" value="1"/>
</dbReference>
<dbReference type="Pfam" id="PF08245">
    <property type="entry name" value="Mur_ligase_M"/>
    <property type="match status" value="1"/>
</dbReference>
<dbReference type="Pfam" id="PF21799">
    <property type="entry name" value="MurD-like_N"/>
    <property type="match status" value="1"/>
</dbReference>
<dbReference type="SUPFAM" id="SSF51984">
    <property type="entry name" value="MurCD N-terminal domain"/>
    <property type="match status" value="1"/>
</dbReference>
<dbReference type="SUPFAM" id="SSF53623">
    <property type="entry name" value="MurD-like peptide ligases, catalytic domain"/>
    <property type="match status" value="1"/>
</dbReference>
<dbReference type="SUPFAM" id="SSF53244">
    <property type="entry name" value="MurD-like peptide ligases, peptide-binding domain"/>
    <property type="match status" value="1"/>
</dbReference>